<accession>Q0BZW6</accession>
<evidence type="ECO:0000255" key="1">
    <source>
        <dbReference type="HAMAP-Rule" id="MF_00294"/>
    </source>
</evidence>
<evidence type="ECO:0000305" key="2"/>
<comment type="similarity">
    <text evidence="1">Belongs to the bacterial ribosomal protein bL33 family.</text>
</comment>
<gene>
    <name evidence="1" type="primary">rpmG</name>
    <name type="ordered locus">HNE_2282</name>
</gene>
<dbReference type="EMBL" id="CP000158">
    <property type="protein sequence ID" value="ABI76886.1"/>
    <property type="molecule type" value="Genomic_DNA"/>
</dbReference>
<dbReference type="RefSeq" id="WP_011647275.1">
    <property type="nucleotide sequence ID" value="NC_008358.1"/>
</dbReference>
<dbReference type="SMR" id="Q0BZW6"/>
<dbReference type="STRING" id="228405.HNE_2282"/>
<dbReference type="KEGG" id="hne:HNE_2282"/>
<dbReference type="eggNOG" id="COG0267">
    <property type="taxonomic scope" value="Bacteria"/>
</dbReference>
<dbReference type="HOGENOM" id="CLU_190949_1_1_5"/>
<dbReference type="Proteomes" id="UP000001959">
    <property type="component" value="Chromosome"/>
</dbReference>
<dbReference type="GO" id="GO:0022625">
    <property type="term" value="C:cytosolic large ribosomal subunit"/>
    <property type="evidence" value="ECO:0007669"/>
    <property type="project" value="TreeGrafter"/>
</dbReference>
<dbReference type="GO" id="GO:0003735">
    <property type="term" value="F:structural constituent of ribosome"/>
    <property type="evidence" value="ECO:0007669"/>
    <property type="project" value="InterPro"/>
</dbReference>
<dbReference type="GO" id="GO:0006412">
    <property type="term" value="P:translation"/>
    <property type="evidence" value="ECO:0007669"/>
    <property type="project" value="UniProtKB-UniRule"/>
</dbReference>
<dbReference type="Gene3D" id="2.20.28.120">
    <property type="entry name" value="Ribosomal protein L33"/>
    <property type="match status" value="1"/>
</dbReference>
<dbReference type="HAMAP" id="MF_00294">
    <property type="entry name" value="Ribosomal_bL33"/>
    <property type="match status" value="1"/>
</dbReference>
<dbReference type="InterPro" id="IPR001705">
    <property type="entry name" value="Ribosomal_bL33"/>
</dbReference>
<dbReference type="InterPro" id="IPR018264">
    <property type="entry name" value="Ribosomal_bL33_CS"/>
</dbReference>
<dbReference type="InterPro" id="IPR038584">
    <property type="entry name" value="Ribosomal_bL33_sf"/>
</dbReference>
<dbReference type="InterPro" id="IPR011332">
    <property type="entry name" value="Ribosomal_zn-bd"/>
</dbReference>
<dbReference type="NCBIfam" id="NF001860">
    <property type="entry name" value="PRK00595.1"/>
    <property type="match status" value="1"/>
</dbReference>
<dbReference type="NCBIfam" id="TIGR01023">
    <property type="entry name" value="rpmG_bact"/>
    <property type="match status" value="1"/>
</dbReference>
<dbReference type="PANTHER" id="PTHR15238">
    <property type="entry name" value="54S RIBOSOMAL PROTEIN L39, MITOCHONDRIAL"/>
    <property type="match status" value="1"/>
</dbReference>
<dbReference type="PANTHER" id="PTHR15238:SF1">
    <property type="entry name" value="LARGE RIBOSOMAL SUBUNIT PROTEIN BL33M"/>
    <property type="match status" value="1"/>
</dbReference>
<dbReference type="Pfam" id="PF00471">
    <property type="entry name" value="Ribosomal_L33"/>
    <property type="match status" value="1"/>
</dbReference>
<dbReference type="SUPFAM" id="SSF57829">
    <property type="entry name" value="Zn-binding ribosomal proteins"/>
    <property type="match status" value="1"/>
</dbReference>
<dbReference type="PROSITE" id="PS00582">
    <property type="entry name" value="RIBOSOMAL_L33"/>
    <property type="match status" value="1"/>
</dbReference>
<keyword id="KW-1185">Reference proteome</keyword>
<keyword id="KW-0687">Ribonucleoprotein</keyword>
<keyword id="KW-0689">Ribosomal protein</keyword>
<reference key="1">
    <citation type="journal article" date="2006" name="J. Bacteriol.">
        <title>Comparative genomic evidence for a close relationship between the dimorphic prosthecate bacteria Hyphomonas neptunium and Caulobacter crescentus.</title>
        <authorList>
            <person name="Badger J.H."/>
            <person name="Hoover T.R."/>
            <person name="Brun Y.V."/>
            <person name="Weiner R.M."/>
            <person name="Laub M.T."/>
            <person name="Alexandre G."/>
            <person name="Mrazek J."/>
            <person name="Ren Q."/>
            <person name="Paulsen I.T."/>
            <person name="Nelson K.E."/>
            <person name="Khouri H.M."/>
            <person name="Radune D."/>
            <person name="Sosa J."/>
            <person name="Dodson R.J."/>
            <person name="Sullivan S.A."/>
            <person name="Rosovitz M.J."/>
            <person name="Madupu R."/>
            <person name="Brinkac L.M."/>
            <person name="Durkin A.S."/>
            <person name="Daugherty S.C."/>
            <person name="Kothari S.P."/>
            <person name="Giglio M.G."/>
            <person name="Zhou L."/>
            <person name="Haft D.H."/>
            <person name="Selengut J.D."/>
            <person name="Davidsen T.M."/>
            <person name="Yang Q."/>
            <person name="Zafar N."/>
            <person name="Ward N.L."/>
        </authorList>
    </citation>
    <scope>NUCLEOTIDE SEQUENCE [LARGE SCALE GENOMIC DNA]</scope>
    <source>
        <strain>ATCC 15444</strain>
    </source>
</reference>
<organism>
    <name type="scientific">Hyphomonas neptunium (strain ATCC 15444)</name>
    <dbReference type="NCBI Taxonomy" id="228405"/>
    <lineage>
        <taxon>Bacteria</taxon>
        <taxon>Pseudomonadati</taxon>
        <taxon>Pseudomonadota</taxon>
        <taxon>Alphaproteobacteria</taxon>
        <taxon>Hyphomonadales</taxon>
        <taxon>Hyphomonadaceae</taxon>
        <taxon>Hyphomonas</taxon>
    </lineage>
</organism>
<sequence length="55" mass="6402">MAKPATIKIRLNSTADTGFFYVTKKNPRTMTEKMVQRKYDPVAKKHVEFKEGKIK</sequence>
<feature type="chain" id="PRO_0000356485" description="Large ribosomal subunit protein bL33">
    <location>
        <begin position="1"/>
        <end position="55"/>
    </location>
</feature>
<name>RL33_HYPNA</name>
<proteinExistence type="inferred from homology"/>
<protein>
    <recommendedName>
        <fullName evidence="1">Large ribosomal subunit protein bL33</fullName>
    </recommendedName>
    <alternativeName>
        <fullName evidence="2">50S ribosomal protein L33</fullName>
    </alternativeName>
</protein>